<comment type="function">
    <text evidence="1">Allows the formation of correctly charged Asn-tRNA(Asn) or Gln-tRNA(Gln) through the transamidation of misacylated Asp-tRNA(Asn) or Glu-tRNA(Gln) in organisms which lack either or both of asparaginyl-tRNA or glutaminyl-tRNA synthetases. The reaction takes place in the presence of glutamine and ATP through an activated phospho-Asp-tRNA(Asn) or phospho-Glu-tRNA(Gln).</text>
</comment>
<comment type="catalytic activity">
    <reaction evidence="1">
        <text>L-glutamyl-tRNA(Gln) + L-glutamine + ATP + H2O = L-glutaminyl-tRNA(Gln) + L-glutamate + ADP + phosphate + H(+)</text>
        <dbReference type="Rhea" id="RHEA:17521"/>
        <dbReference type="Rhea" id="RHEA-COMP:9681"/>
        <dbReference type="Rhea" id="RHEA-COMP:9684"/>
        <dbReference type="ChEBI" id="CHEBI:15377"/>
        <dbReference type="ChEBI" id="CHEBI:15378"/>
        <dbReference type="ChEBI" id="CHEBI:29985"/>
        <dbReference type="ChEBI" id="CHEBI:30616"/>
        <dbReference type="ChEBI" id="CHEBI:43474"/>
        <dbReference type="ChEBI" id="CHEBI:58359"/>
        <dbReference type="ChEBI" id="CHEBI:78520"/>
        <dbReference type="ChEBI" id="CHEBI:78521"/>
        <dbReference type="ChEBI" id="CHEBI:456216"/>
    </reaction>
</comment>
<comment type="catalytic activity">
    <reaction evidence="1">
        <text>L-aspartyl-tRNA(Asn) + L-glutamine + ATP + H2O = L-asparaginyl-tRNA(Asn) + L-glutamate + ADP + phosphate + 2 H(+)</text>
        <dbReference type="Rhea" id="RHEA:14513"/>
        <dbReference type="Rhea" id="RHEA-COMP:9674"/>
        <dbReference type="Rhea" id="RHEA-COMP:9677"/>
        <dbReference type="ChEBI" id="CHEBI:15377"/>
        <dbReference type="ChEBI" id="CHEBI:15378"/>
        <dbReference type="ChEBI" id="CHEBI:29985"/>
        <dbReference type="ChEBI" id="CHEBI:30616"/>
        <dbReference type="ChEBI" id="CHEBI:43474"/>
        <dbReference type="ChEBI" id="CHEBI:58359"/>
        <dbReference type="ChEBI" id="CHEBI:78515"/>
        <dbReference type="ChEBI" id="CHEBI:78516"/>
        <dbReference type="ChEBI" id="CHEBI:456216"/>
    </reaction>
</comment>
<comment type="subunit">
    <text evidence="1">Heterotrimer of A, B and C subunits.</text>
</comment>
<comment type="similarity">
    <text evidence="1">Belongs to the GatB/GatE family. GatB subfamily.</text>
</comment>
<proteinExistence type="inferred from homology"/>
<organism>
    <name type="scientific">Pseudomonas entomophila (strain L48)</name>
    <dbReference type="NCBI Taxonomy" id="384676"/>
    <lineage>
        <taxon>Bacteria</taxon>
        <taxon>Pseudomonadati</taxon>
        <taxon>Pseudomonadota</taxon>
        <taxon>Gammaproteobacteria</taxon>
        <taxon>Pseudomonadales</taxon>
        <taxon>Pseudomonadaceae</taxon>
        <taxon>Pseudomonas</taxon>
    </lineage>
</organism>
<gene>
    <name evidence="1" type="primary">gatB</name>
    <name type="ordered locus">PSEEN1071</name>
</gene>
<keyword id="KW-0067">ATP-binding</keyword>
<keyword id="KW-0436">Ligase</keyword>
<keyword id="KW-0547">Nucleotide-binding</keyword>
<keyword id="KW-0648">Protein biosynthesis</keyword>
<evidence type="ECO:0000255" key="1">
    <source>
        <dbReference type="HAMAP-Rule" id="MF_00121"/>
    </source>
</evidence>
<sequence length="481" mass="52649">MQWEVVIGLEIHTQLATQSKIFSGSATTFGSEPNTQASLVDLGMPGVLPVLNQEAVRMACMFGLAIDAEIGPRNVFARKNYFYPDLPKGYQISQMDLPIVGKGHLDIALEDGTIKRIGVTRAHLEEDAGKSLHEDFNGATGIDLNRAGTPLLEIVSEPDMRSAKEAVAYVKAIHALVRYLGICDGNMAEGSLRCDCNVSVRPKGQVEFGTRCEIKNVNSFRFIERAINSEIQRQIDLIEDGGKVVQETRLYDPNKDETRSMRSKEEANDYRYFPDPDLLPVVIEQSFLDSVRAALPELPTQKVERFQSQYGLSAYDANVLASSREQADYFEQVVSIGGDAKLAANWVMVELGSLLNKLGVEIDQSPVSAEQLGGMLLRIRDNTISGKIAKTVFEAMAAGEGDADSIIESKGLKQVTDTGAIDKMLDEMLAANAEQVEQYRAADEAKRGKMFGFFVGQAMKASKGKANPGQVNQLLKAKLEG</sequence>
<name>GATB_PSEE4</name>
<accession>Q1IED4</accession>
<reference key="1">
    <citation type="journal article" date="2006" name="Nat. Biotechnol.">
        <title>Complete genome sequence of the entomopathogenic and metabolically versatile soil bacterium Pseudomonas entomophila.</title>
        <authorList>
            <person name="Vodovar N."/>
            <person name="Vallenet D."/>
            <person name="Cruveiller S."/>
            <person name="Rouy Z."/>
            <person name="Barbe V."/>
            <person name="Acosta C."/>
            <person name="Cattolico L."/>
            <person name="Jubin C."/>
            <person name="Lajus A."/>
            <person name="Segurens B."/>
            <person name="Vacherie B."/>
            <person name="Wincker P."/>
            <person name="Weissenbach J."/>
            <person name="Lemaitre B."/>
            <person name="Medigue C."/>
            <person name="Boccard F."/>
        </authorList>
    </citation>
    <scope>NUCLEOTIDE SEQUENCE [LARGE SCALE GENOMIC DNA]</scope>
    <source>
        <strain>L48</strain>
    </source>
</reference>
<dbReference type="EC" id="6.3.5.-" evidence="1"/>
<dbReference type="EMBL" id="CT573326">
    <property type="protein sequence ID" value="CAK13971.1"/>
    <property type="molecule type" value="Genomic_DNA"/>
</dbReference>
<dbReference type="RefSeq" id="WP_011532394.1">
    <property type="nucleotide sequence ID" value="NC_008027.1"/>
</dbReference>
<dbReference type="SMR" id="Q1IED4"/>
<dbReference type="STRING" id="384676.PSEEN1071"/>
<dbReference type="GeneID" id="32804362"/>
<dbReference type="KEGG" id="pen:PSEEN1071"/>
<dbReference type="eggNOG" id="COG0064">
    <property type="taxonomic scope" value="Bacteria"/>
</dbReference>
<dbReference type="HOGENOM" id="CLU_019240_0_0_6"/>
<dbReference type="OrthoDB" id="9804078at2"/>
<dbReference type="Proteomes" id="UP000000658">
    <property type="component" value="Chromosome"/>
</dbReference>
<dbReference type="GO" id="GO:0050566">
    <property type="term" value="F:asparaginyl-tRNA synthase (glutamine-hydrolyzing) activity"/>
    <property type="evidence" value="ECO:0007669"/>
    <property type="project" value="RHEA"/>
</dbReference>
<dbReference type="GO" id="GO:0005524">
    <property type="term" value="F:ATP binding"/>
    <property type="evidence" value="ECO:0007669"/>
    <property type="project" value="UniProtKB-KW"/>
</dbReference>
<dbReference type="GO" id="GO:0050567">
    <property type="term" value="F:glutaminyl-tRNA synthase (glutamine-hydrolyzing) activity"/>
    <property type="evidence" value="ECO:0007669"/>
    <property type="project" value="UniProtKB-UniRule"/>
</dbReference>
<dbReference type="GO" id="GO:0070681">
    <property type="term" value="P:glutaminyl-tRNAGln biosynthesis via transamidation"/>
    <property type="evidence" value="ECO:0007669"/>
    <property type="project" value="TreeGrafter"/>
</dbReference>
<dbReference type="GO" id="GO:0006412">
    <property type="term" value="P:translation"/>
    <property type="evidence" value="ECO:0007669"/>
    <property type="project" value="UniProtKB-UniRule"/>
</dbReference>
<dbReference type="FunFam" id="1.10.10.410:FF:000001">
    <property type="entry name" value="Aspartyl/glutamyl-tRNA(Asn/Gln) amidotransferase subunit B"/>
    <property type="match status" value="1"/>
</dbReference>
<dbReference type="FunFam" id="1.10.150.380:FF:000001">
    <property type="entry name" value="Aspartyl/glutamyl-tRNA(Asn/Gln) amidotransferase subunit B"/>
    <property type="match status" value="1"/>
</dbReference>
<dbReference type="Gene3D" id="1.10.10.410">
    <property type="match status" value="1"/>
</dbReference>
<dbReference type="Gene3D" id="1.10.150.380">
    <property type="entry name" value="GatB domain, N-terminal subdomain"/>
    <property type="match status" value="1"/>
</dbReference>
<dbReference type="HAMAP" id="MF_00121">
    <property type="entry name" value="GatB"/>
    <property type="match status" value="1"/>
</dbReference>
<dbReference type="InterPro" id="IPR017959">
    <property type="entry name" value="Asn/Gln-tRNA_amidoTrfase_suB/E"/>
</dbReference>
<dbReference type="InterPro" id="IPR006075">
    <property type="entry name" value="Asn/Gln-tRNA_Trfase_suB/E_cat"/>
</dbReference>
<dbReference type="InterPro" id="IPR018027">
    <property type="entry name" value="Asn/Gln_amidotransferase"/>
</dbReference>
<dbReference type="InterPro" id="IPR003789">
    <property type="entry name" value="Asn/Gln_tRNA_amidoTrase-B-like"/>
</dbReference>
<dbReference type="InterPro" id="IPR004413">
    <property type="entry name" value="GatB"/>
</dbReference>
<dbReference type="InterPro" id="IPR042114">
    <property type="entry name" value="GatB_C_1"/>
</dbReference>
<dbReference type="InterPro" id="IPR023168">
    <property type="entry name" value="GatB_Yqey_C_2"/>
</dbReference>
<dbReference type="InterPro" id="IPR017958">
    <property type="entry name" value="Gln-tRNA_amidoTrfase_suB_CS"/>
</dbReference>
<dbReference type="InterPro" id="IPR014746">
    <property type="entry name" value="Gln_synth/guanido_kin_cat_dom"/>
</dbReference>
<dbReference type="NCBIfam" id="TIGR00133">
    <property type="entry name" value="gatB"/>
    <property type="match status" value="1"/>
</dbReference>
<dbReference type="NCBIfam" id="NF004012">
    <property type="entry name" value="PRK05477.1-2"/>
    <property type="match status" value="1"/>
</dbReference>
<dbReference type="NCBIfam" id="NF004014">
    <property type="entry name" value="PRK05477.1-4"/>
    <property type="match status" value="1"/>
</dbReference>
<dbReference type="NCBIfam" id="NF004015">
    <property type="entry name" value="PRK05477.1-5"/>
    <property type="match status" value="1"/>
</dbReference>
<dbReference type="PANTHER" id="PTHR11659">
    <property type="entry name" value="GLUTAMYL-TRNA GLN AMIDOTRANSFERASE SUBUNIT B MITOCHONDRIAL AND PROKARYOTIC PET112-RELATED"/>
    <property type="match status" value="1"/>
</dbReference>
<dbReference type="PANTHER" id="PTHR11659:SF0">
    <property type="entry name" value="GLUTAMYL-TRNA(GLN) AMIDOTRANSFERASE SUBUNIT B, MITOCHONDRIAL"/>
    <property type="match status" value="1"/>
</dbReference>
<dbReference type="Pfam" id="PF02934">
    <property type="entry name" value="GatB_N"/>
    <property type="match status" value="1"/>
</dbReference>
<dbReference type="Pfam" id="PF02637">
    <property type="entry name" value="GatB_Yqey"/>
    <property type="match status" value="1"/>
</dbReference>
<dbReference type="SMART" id="SM00845">
    <property type="entry name" value="GatB_Yqey"/>
    <property type="match status" value="1"/>
</dbReference>
<dbReference type="SUPFAM" id="SSF89095">
    <property type="entry name" value="GatB/YqeY motif"/>
    <property type="match status" value="1"/>
</dbReference>
<dbReference type="SUPFAM" id="SSF55931">
    <property type="entry name" value="Glutamine synthetase/guanido kinase"/>
    <property type="match status" value="1"/>
</dbReference>
<dbReference type="PROSITE" id="PS01234">
    <property type="entry name" value="GATB"/>
    <property type="match status" value="1"/>
</dbReference>
<feature type="chain" id="PRO_1000016022" description="Aspartyl/glutamyl-tRNA(Asn/Gln) amidotransferase subunit B">
    <location>
        <begin position="1"/>
        <end position="481"/>
    </location>
</feature>
<protein>
    <recommendedName>
        <fullName evidence="1">Aspartyl/glutamyl-tRNA(Asn/Gln) amidotransferase subunit B</fullName>
        <shortName evidence="1">Asp/Glu-ADT subunit B</shortName>
        <ecNumber evidence="1">6.3.5.-</ecNumber>
    </recommendedName>
</protein>